<organism>
    <name type="scientific">Spodoptera frugiperda</name>
    <name type="common">Fall armyworm</name>
    <dbReference type="NCBI Taxonomy" id="7108"/>
    <lineage>
        <taxon>Eukaryota</taxon>
        <taxon>Metazoa</taxon>
        <taxon>Ecdysozoa</taxon>
        <taxon>Arthropoda</taxon>
        <taxon>Hexapoda</taxon>
        <taxon>Insecta</taxon>
        <taxon>Pterygota</taxon>
        <taxon>Neoptera</taxon>
        <taxon>Endopterygota</taxon>
        <taxon>Lepidoptera</taxon>
        <taxon>Glossata</taxon>
        <taxon>Ditrysia</taxon>
        <taxon>Noctuoidea</taxon>
        <taxon>Noctuidae</taxon>
        <taxon>Amphipyrinae</taxon>
        <taxon>Spodoptera</taxon>
    </lineage>
</organism>
<sequence length="56" mass="6629">MGHANIWYSHPRRYGQGSRSCRACSNRHGLIRKYGLNICRQCFREYAHDIGFKKLD</sequence>
<proteinExistence type="inferred from homology"/>
<gene>
    <name type="primary">RpS29</name>
</gene>
<dbReference type="EMBL" id="AY072293">
    <property type="protein sequence ID" value="AAL62474.1"/>
    <property type="molecule type" value="mRNA"/>
</dbReference>
<dbReference type="SMR" id="Q8WQI3"/>
<dbReference type="EnsemblMetazoa" id="XM_035594023.2">
    <property type="protein sequence ID" value="XP_035449916.1"/>
    <property type="gene ID" value="LOC118275901"/>
</dbReference>
<dbReference type="OrthoDB" id="10252683at2759"/>
<dbReference type="Proteomes" id="UP000829999">
    <property type="component" value="Unplaced"/>
</dbReference>
<dbReference type="GO" id="GO:0022627">
    <property type="term" value="C:cytosolic small ribosomal subunit"/>
    <property type="evidence" value="ECO:0000250"/>
    <property type="project" value="UniProtKB"/>
</dbReference>
<dbReference type="GO" id="GO:0005840">
    <property type="term" value="C:ribosome"/>
    <property type="evidence" value="ECO:0000250"/>
    <property type="project" value="UniProtKB"/>
</dbReference>
<dbReference type="GO" id="GO:0005791">
    <property type="term" value="C:rough endoplasmic reticulum"/>
    <property type="evidence" value="ECO:0007669"/>
    <property type="project" value="UniProtKB-SubCell"/>
</dbReference>
<dbReference type="GO" id="GO:0003735">
    <property type="term" value="F:structural constituent of ribosome"/>
    <property type="evidence" value="ECO:0007669"/>
    <property type="project" value="InterPro"/>
</dbReference>
<dbReference type="GO" id="GO:0008270">
    <property type="term" value="F:zinc ion binding"/>
    <property type="evidence" value="ECO:0000250"/>
    <property type="project" value="UniProtKB"/>
</dbReference>
<dbReference type="GO" id="GO:0002181">
    <property type="term" value="P:cytoplasmic translation"/>
    <property type="evidence" value="ECO:0000250"/>
    <property type="project" value="UniProtKB"/>
</dbReference>
<dbReference type="FunFam" id="4.10.830.10:FF:000002">
    <property type="entry name" value="40S ribosomal protein S29"/>
    <property type="match status" value="1"/>
</dbReference>
<dbReference type="Gene3D" id="4.10.830.10">
    <property type="entry name" value="30s Ribosomal Protein S14, Chain N"/>
    <property type="match status" value="1"/>
</dbReference>
<dbReference type="InterPro" id="IPR001209">
    <property type="entry name" value="Ribosomal_uS14"/>
</dbReference>
<dbReference type="InterPro" id="IPR018271">
    <property type="entry name" value="Ribosomal_uS14_CS"/>
</dbReference>
<dbReference type="InterPro" id="IPR039744">
    <property type="entry name" value="RIbosomal_uS14_euk_arc"/>
</dbReference>
<dbReference type="InterPro" id="IPR043140">
    <property type="entry name" value="Ribosomal_uS14_sf"/>
</dbReference>
<dbReference type="NCBIfam" id="NF004424">
    <property type="entry name" value="PRK05766.1"/>
    <property type="match status" value="1"/>
</dbReference>
<dbReference type="PANTHER" id="PTHR12010">
    <property type="entry name" value="40S RIBOSOMAL PROTEIN S29"/>
    <property type="match status" value="1"/>
</dbReference>
<dbReference type="PANTHER" id="PTHR12010:SF2">
    <property type="entry name" value="40S RIBOSOMAL PROTEIN S29"/>
    <property type="match status" value="1"/>
</dbReference>
<dbReference type="Pfam" id="PF00253">
    <property type="entry name" value="Ribosomal_S14"/>
    <property type="match status" value="1"/>
</dbReference>
<dbReference type="PROSITE" id="PS00527">
    <property type="entry name" value="RIBOSOMAL_S14"/>
    <property type="match status" value="1"/>
</dbReference>
<protein>
    <recommendedName>
        <fullName evidence="5">Small ribosomal subunit protein uS14</fullName>
    </recommendedName>
    <alternativeName>
        <fullName>40S ribosomal protein S29</fullName>
    </alternativeName>
</protein>
<keyword id="KW-0963">Cytoplasm</keyword>
<keyword id="KW-0256">Endoplasmic reticulum</keyword>
<keyword id="KW-0479">Metal-binding</keyword>
<keyword id="KW-0687">Ribonucleoprotein</keyword>
<keyword id="KW-0689">Ribosomal protein</keyword>
<keyword id="KW-0862">Zinc</keyword>
<name>RS29_SPOFR</name>
<feature type="chain" id="PRO_0000131027" description="Small ribosomal subunit protein uS14">
    <location>
        <begin position="1"/>
        <end position="56"/>
    </location>
</feature>
<feature type="binding site" evidence="4">
    <location>
        <position position="21"/>
    </location>
    <ligand>
        <name>Zn(2+)</name>
        <dbReference type="ChEBI" id="CHEBI:29105"/>
    </ligand>
</feature>
<feature type="binding site" evidence="4">
    <location>
        <position position="24"/>
    </location>
    <ligand>
        <name>Zn(2+)</name>
        <dbReference type="ChEBI" id="CHEBI:29105"/>
    </ligand>
</feature>
<feature type="binding site" evidence="4">
    <location>
        <position position="39"/>
    </location>
    <ligand>
        <name>Zn(2+)</name>
        <dbReference type="ChEBI" id="CHEBI:29105"/>
    </ligand>
</feature>
<feature type="binding site" evidence="4">
    <location>
        <position position="42"/>
    </location>
    <ligand>
        <name>Zn(2+)</name>
        <dbReference type="ChEBI" id="CHEBI:29105"/>
    </ligand>
</feature>
<evidence type="ECO:0000250" key="1">
    <source>
        <dbReference type="UniProtKB" id="P62273"/>
    </source>
</evidence>
<evidence type="ECO:0000250" key="2">
    <source>
        <dbReference type="UniProtKB" id="Q6QAP6"/>
    </source>
</evidence>
<evidence type="ECO:0000250" key="3">
    <source>
        <dbReference type="UniProtKB" id="Q9VH69"/>
    </source>
</evidence>
<evidence type="ECO:0000255" key="4"/>
<evidence type="ECO:0000305" key="5"/>
<accession>Q8WQI3</accession>
<reference key="1">
    <citation type="journal article" date="2003" name="Bioinformatics">
        <title>Annotation pattern of ESTs from Spodoptera frugiperda Sf9 cells and analysis of the ribosomal protein genes reveal insect-specific features and unexpectedly low codon usage bias.</title>
        <authorList>
            <person name="Landais I."/>
            <person name="Ogliastro M."/>
            <person name="Mita K."/>
            <person name="Nohata J."/>
            <person name="Lopez-Ferber M."/>
            <person name="Duonor-Cerutti M."/>
            <person name="Shimada T."/>
            <person name="Fournier P."/>
            <person name="Devauchelle G."/>
        </authorList>
    </citation>
    <scope>NUCLEOTIDE SEQUENCE [LARGE SCALE MRNA]</scope>
</reference>
<comment type="cofactor">
    <cofactor evidence="1">
        <name>Zn(2+)</name>
        <dbReference type="ChEBI" id="CHEBI:29105"/>
    </cofactor>
    <text evidence="1">Binds 1 zinc ion per subunit.</text>
</comment>
<comment type="subunit">
    <text evidence="3">Component of the 40S small ribosomal subunit.</text>
</comment>
<comment type="subcellular location">
    <subcellularLocation>
        <location evidence="1">Cytoplasm</location>
        <location evidence="1">Cytosol</location>
    </subcellularLocation>
    <subcellularLocation>
        <location evidence="1">Cytoplasm</location>
    </subcellularLocation>
    <subcellularLocation>
        <location evidence="2">Rough endoplasmic reticulum</location>
    </subcellularLocation>
    <text evidence="1 2">Detected on cytosolic polysomes (By similarity). Detected in ribosomes that are associated with the rough endoplasmic reticulum (By similarity).</text>
</comment>
<comment type="similarity">
    <text evidence="5">Belongs to the universal ribosomal protein uS14 family.</text>
</comment>